<organism>
    <name type="scientific">Acinetobacter baumannii (strain ACICU)</name>
    <dbReference type="NCBI Taxonomy" id="405416"/>
    <lineage>
        <taxon>Bacteria</taxon>
        <taxon>Pseudomonadati</taxon>
        <taxon>Pseudomonadota</taxon>
        <taxon>Gammaproteobacteria</taxon>
        <taxon>Moraxellales</taxon>
        <taxon>Moraxellaceae</taxon>
        <taxon>Acinetobacter</taxon>
        <taxon>Acinetobacter calcoaceticus/baumannii complex</taxon>
    </lineage>
</organism>
<gene>
    <name evidence="1" type="primary">rplP</name>
    <name type="ordered locus">ACICU_03272</name>
</gene>
<evidence type="ECO:0000255" key="1">
    <source>
        <dbReference type="HAMAP-Rule" id="MF_01342"/>
    </source>
</evidence>
<evidence type="ECO:0000305" key="2"/>
<proteinExistence type="inferred from homology"/>
<name>RL16_ACIBC</name>
<accession>B2HZA1</accession>
<keyword id="KW-0687">Ribonucleoprotein</keyword>
<keyword id="KW-0689">Ribosomal protein</keyword>
<keyword id="KW-0694">RNA-binding</keyword>
<keyword id="KW-0699">rRNA-binding</keyword>
<keyword id="KW-0820">tRNA-binding</keyword>
<dbReference type="EMBL" id="CP000863">
    <property type="protein sequence ID" value="ACC58583.1"/>
    <property type="molecule type" value="Genomic_DNA"/>
</dbReference>
<dbReference type="RefSeq" id="WP_000941215.1">
    <property type="nucleotide sequence ID" value="NZ_CP031380.1"/>
</dbReference>
<dbReference type="SMR" id="B2HZA1"/>
<dbReference type="GeneID" id="92895310"/>
<dbReference type="KEGG" id="abc:ACICU_03272"/>
<dbReference type="HOGENOM" id="CLU_078858_2_1_6"/>
<dbReference type="Proteomes" id="UP000008839">
    <property type="component" value="Chromosome"/>
</dbReference>
<dbReference type="GO" id="GO:0022625">
    <property type="term" value="C:cytosolic large ribosomal subunit"/>
    <property type="evidence" value="ECO:0007669"/>
    <property type="project" value="TreeGrafter"/>
</dbReference>
<dbReference type="GO" id="GO:0019843">
    <property type="term" value="F:rRNA binding"/>
    <property type="evidence" value="ECO:0007669"/>
    <property type="project" value="UniProtKB-UniRule"/>
</dbReference>
<dbReference type="GO" id="GO:0003735">
    <property type="term" value="F:structural constituent of ribosome"/>
    <property type="evidence" value="ECO:0007669"/>
    <property type="project" value="InterPro"/>
</dbReference>
<dbReference type="GO" id="GO:0000049">
    <property type="term" value="F:tRNA binding"/>
    <property type="evidence" value="ECO:0007669"/>
    <property type="project" value="UniProtKB-KW"/>
</dbReference>
<dbReference type="GO" id="GO:0006412">
    <property type="term" value="P:translation"/>
    <property type="evidence" value="ECO:0007669"/>
    <property type="project" value="UniProtKB-UniRule"/>
</dbReference>
<dbReference type="CDD" id="cd01433">
    <property type="entry name" value="Ribosomal_L16_L10e"/>
    <property type="match status" value="1"/>
</dbReference>
<dbReference type="FunFam" id="3.90.1170.10:FF:000001">
    <property type="entry name" value="50S ribosomal protein L16"/>
    <property type="match status" value="1"/>
</dbReference>
<dbReference type="Gene3D" id="3.90.1170.10">
    <property type="entry name" value="Ribosomal protein L10e/L16"/>
    <property type="match status" value="1"/>
</dbReference>
<dbReference type="HAMAP" id="MF_01342">
    <property type="entry name" value="Ribosomal_uL16"/>
    <property type="match status" value="1"/>
</dbReference>
<dbReference type="InterPro" id="IPR047873">
    <property type="entry name" value="Ribosomal_uL16"/>
</dbReference>
<dbReference type="InterPro" id="IPR000114">
    <property type="entry name" value="Ribosomal_uL16_bact-type"/>
</dbReference>
<dbReference type="InterPro" id="IPR020798">
    <property type="entry name" value="Ribosomal_uL16_CS"/>
</dbReference>
<dbReference type="InterPro" id="IPR016180">
    <property type="entry name" value="Ribosomal_uL16_dom"/>
</dbReference>
<dbReference type="InterPro" id="IPR036920">
    <property type="entry name" value="Ribosomal_uL16_sf"/>
</dbReference>
<dbReference type="NCBIfam" id="TIGR01164">
    <property type="entry name" value="rplP_bact"/>
    <property type="match status" value="1"/>
</dbReference>
<dbReference type="PANTHER" id="PTHR12220">
    <property type="entry name" value="50S/60S RIBOSOMAL PROTEIN L16"/>
    <property type="match status" value="1"/>
</dbReference>
<dbReference type="PANTHER" id="PTHR12220:SF13">
    <property type="entry name" value="LARGE RIBOSOMAL SUBUNIT PROTEIN UL16M"/>
    <property type="match status" value="1"/>
</dbReference>
<dbReference type="Pfam" id="PF00252">
    <property type="entry name" value="Ribosomal_L16"/>
    <property type="match status" value="1"/>
</dbReference>
<dbReference type="PRINTS" id="PR00060">
    <property type="entry name" value="RIBOSOMALL16"/>
</dbReference>
<dbReference type="SUPFAM" id="SSF54686">
    <property type="entry name" value="Ribosomal protein L16p/L10e"/>
    <property type="match status" value="1"/>
</dbReference>
<dbReference type="PROSITE" id="PS00701">
    <property type="entry name" value="RIBOSOMAL_L16_2"/>
    <property type="match status" value="1"/>
</dbReference>
<protein>
    <recommendedName>
        <fullName evidence="1">Large ribosomal subunit protein uL16</fullName>
    </recommendedName>
    <alternativeName>
        <fullName evidence="2">50S ribosomal protein L16</fullName>
    </alternativeName>
</protein>
<comment type="function">
    <text evidence="1">Binds 23S rRNA and is also seen to make contacts with the A and possibly P site tRNAs.</text>
</comment>
<comment type="subunit">
    <text evidence="1">Part of the 50S ribosomal subunit.</text>
</comment>
<comment type="similarity">
    <text evidence="1">Belongs to the universal ribosomal protein uL16 family.</text>
</comment>
<reference key="1">
    <citation type="journal article" date="2008" name="Antimicrob. Agents Chemother.">
        <title>Whole-genome pyrosequencing of an epidemic multidrug-resistant Acinetobacter baumannii strain belonging to the European clone II group.</title>
        <authorList>
            <person name="Iacono M."/>
            <person name="Villa L."/>
            <person name="Fortini D."/>
            <person name="Bordoni R."/>
            <person name="Imperi F."/>
            <person name="Bonnal R.J."/>
            <person name="Sicheritz-Ponten T."/>
            <person name="De Bellis G."/>
            <person name="Visca P."/>
            <person name="Cassone A."/>
            <person name="Carattoli A."/>
        </authorList>
    </citation>
    <scope>NUCLEOTIDE SEQUENCE [LARGE SCALE GENOMIC DNA]</scope>
    <source>
        <strain>ACICU</strain>
    </source>
</reference>
<feature type="chain" id="PRO_1000142908" description="Large ribosomal subunit protein uL16">
    <location>
        <begin position="1"/>
        <end position="137"/>
    </location>
</feature>
<sequence length="137" mass="15466">MLQPKRTKFRKVHKGRNTGLAHRGSTVSFGSIAIKATERGRMTARQIEAARRTISRRIKRGGKIFIRVFPDKPITEKPLEVRMGNGKGNVEYWVCEIKPGKILYEIEGVNEDLAREAFALAAAKLPFKTTIVTRTVM</sequence>